<dbReference type="EC" id="4.2.1.80" evidence="1"/>
<dbReference type="EMBL" id="CP000647">
    <property type="protein sequence ID" value="ABR77547.1"/>
    <property type="status" value="ALT_INIT"/>
    <property type="molecule type" value="Genomic_DNA"/>
</dbReference>
<dbReference type="RefSeq" id="WP_002908598.1">
    <property type="nucleotide sequence ID" value="NC_009648.1"/>
</dbReference>
<dbReference type="SMR" id="A6TAC6"/>
<dbReference type="STRING" id="272620.KPN_02119"/>
<dbReference type="PaxDb" id="272620-KPN_02119"/>
<dbReference type="EnsemblBacteria" id="ABR77547">
    <property type="protein sequence ID" value="ABR77547"/>
    <property type="gene ID" value="KPN_02119"/>
</dbReference>
<dbReference type="KEGG" id="kpn:KPN_02119"/>
<dbReference type="HOGENOM" id="CLU_060136_4_1_6"/>
<dbReference type="UniPathway" id="UPA00714"/>
<dbReference type="Proteomes" id="UP000000265">
    <property type="component" value="Chromosome"/>
</dbReference>
<dbReference type="GO" id="GO:0005737">
    <property type="term" value="C:cytoplasm"/>
    <property type="evidence" value="ECO:0007669"/>
    <property type="project" value="TreeGrafter"/>
</dbReference>
<dbReference type="GO" id="GO:0008684">
    <property type="term" value="F:2-oxopent-4-enoate hydratase activity"/>
    <property type="evidence" value="ECO:0007669"/>
    <property type="project" value="UniProtKB-UniRule"/>
</dbReference>
<dbReference type="GO" id="GO:0030145">
    <property type="term" value="F:manganese ion binding"/>
    <property type="evidence" value="ECO:0007669"/>
    <property type="project" value="InterPro"/>
</dbReference>
<dbReference type="GO" id="GO:0019380">
    <property type="term" value="P:3-phenylpropionate catabolic process"/>
    <property type="evidence" value="ECO:0007669"/>
    <property type="project" value="UniProtKB-UniRule"/>
</dbReference>
<dbReference type="Gene3D" id="3.90.850.10">
    <property type="entry name" value="Fumarylacetoacetase-like, C-terminal domain"/>
    <property type="match status" value="1"/>
</dbReference>
<dbReference type="HAMAP" id="MF_01655">
    <property type="entry name" value="MhpD"/>
    <property type="match status" value="1"/>
</dbReference>
<dbReference type="InterPro" id="IPR011234">
    <property type="entry name" value="Fumarylacetoacetase-like_C"/>
</dbReference>
<dbReference type="InterPro" id="IPR036663">
    <property type="entry name" value="Fumarylacetoacetase_C_sf"/>
</dbReference>
<dbReference type="InterPro" id="IPR050772">
    <property type="entry name" value="Hydratase-Decarb/MhpD_sf"/>
</dbReference>
<dbReference type="InterPro" id="IPR023793">
    <property type="entry name" value="Keto_pentenoate-hydratase"/>
</dbReference>
<dbReference type="NCBIfam" id="NF008461">
    <property type="entry name" value="PRK11342.1"/>
    <property type="match status" value="1"/>
</dbReference>
<dbReference type="PANTHER" id="PTHR30143:SF0">
    <property type="entry name" value="2-KETO-4-PENTENOATE HYDRATASE"/>
    <property type="match status" value="1"/>
</dbReference>
<dbReference type="PANTHER" id="PTHR30143">
    <property type="entry name" value="ACID HYDRATASE"/>
    <property type="match status" value="1"/>
</dbReference>
<dbReference type="Pfam" id="PF01557">
    <property type="entry name" value="FAA_hydrolase"/>
    <property type="match status" value="1"/>
</dbReference>
<dbReference type="SUPFAM" id="SSF56529">
    <property type="entry name" value="FAH"/>
    <property type="match status" value="1"/>
</dbReference>
<sequence>MTFSLDALARQLRDAEQSGQAIAPLRDILGVDNADAAYAIQRLNVQHHVAHGRRVVGRKVGLTHPKVQQQLGVNQPDFGTLFADMCYGDNAEVPFGRVLQPKVEAEIALVLKQDLPHADTTFDELYNAIEWVLPALEVVGSRIRDWSIGFVDTVADNASCGLYVIGGPAQRPAGLDLKQCAMHMTRNQELVSSGRGSECLGHPLNAAVWLARKLASLGEPLRAGDIVLTGALGPMVTINEGDSFVAHIEGIGSVAARFVAAGEGDRDA</sequence>
<comment type="function">
    <text evidence="1">Catalyzes the conversion of 2-hydroxypentadienoic acid (enolic form of 2-oxopent-4-enoate) to 4-hydroxy-2-ketopentanoic acid.</text>
</comment>
<comment type="catalytic activity">
    <reaction evidence="1">
        <text>(S)-4-hydroxy-2-oxopentanoate = (2Z)-2-hydroxypenta-2,4-dienoate + H2O</text>
        <dbReference type="Rhea" id="RHEA:22580"/>
        <dbReference type="ChEBI" id="CHEBI:15377"/>
        <dbReference type="ChEBI" id="CHEBI:67152"/>
        <dbReference type="ChEBI" id="CHEBI:73143"/>
        <dbReference type="EC" id="4.2.1.80"/>
    </reaction>
</comment>
<comment type="cofactor">
    <cofactor evidence="1">
        <name>a divalent metal cation</name>
        <dbReference type="ChEBI" id="CHEBI:60240"/>
    </cofactor>
</comment>
<comment type="pathway">
    <text evidence="1">Aromatic compound metabolism; 3-phenylpropanoate degradation.</text>
</comment>
<comment type="similarity">
    <text evidence="1">Belongs to the hydratase/decarboxylase family. MhpD subfamily.</text>
</comment>
<comment type="sequence caution" evidence="2">
    <conflict type="erroneous initiation">
        <sequence resource="EMBL-CDS" id="ABR77547"/>
    </conflict>
</comment>
<keyword id="KW-0058">Aromatic hydrocarbons catabolism</keyword>
<keyword id="KW-0456">Lyase</keyword>
<accession>A6TAC6</accession>
<gene>
    <name evidence="1" type="primary">mhpD</name>
    <name type="ordered locus">KPN78578_20860</name>
    <name type="ORF">KPN_02119</name>
</gene>
<feature type="chain" id="PRO_0000337796" description="2-keto-4-pentenoate hydratase">
    <location>
        <begin position="1"/>
        <end position="268"/>
    </location>
</feature>
<evidence type="ECO:0000255" key="1">
    <source>
        <dbReference type="HAMAP-Rule" id="MF_01655"/>
    </source>
</evidence>
<evidence type="ECO:0000305" key="2"/>
<protein>
    <recommendedName>
        <fullName evidence="1">2-keto-4-pentenoate hydratase</fullName>
        <ecNumber evidence="1">4.2.1.80</ecNumber>
    </recommendedName>
    <alternativeName>
        <fullName evidence="1">2-hydroxypentadienoic acid hydratase</fullName>
    </alternativeName>
</protein>
<reference key="1">
    <citation type="submission" date="2006-09" db="EMBL/GenBank/DDBJ databases">
        <authorList>
            <consortium name="The Klebsiella pneumonia Genome Sequencing Project"/>
            <person name="McClelland M."/>
            <person name="Sanderson E.K."/>
            <person name="Spieth J."/>
            <person name="Clifton W.S."/>
            <person name="Latreille P."/>
            <person name="Sabo A."/>
            <person name="Pepin K."/>
            <person name="Bhonagiri V."/>
            <person name="Porwollik S."/>
            <person name="Ali J."/>
            <person name="Wilson R.K."/>
        </authorList>
    </citation>
    <scope>NUCLEOTIDE SEQUENCE [LARGE SCALE GENOMIC DNA]</scope>
    <source>
        <strain>ATCC 700721 / MGH 78578</strain>
    </source>
</reference>
<name>MHPD_KLEP7</name>
<organism>
    <name type="scientific">Klebsiella pneumoniae subsp. pneumoniae (strain ATCC 700721 / MGH 78578)</name>
    <dbReference type="NCBI Taxonomy" id="272620"/>
    <lineage>
        <taxon>Bacteria</taxon>
        <taxon>Pseudomonadati</taxon>
        <taxon>Pseudomonadota</taxon>
        <taxon>Gammaproteobacteria</taxon>
        <taxon>Enterobacterales</taxon>
        <taxon>Enterobacteriaceae</taxon>
        <taxon>Klebsiella/Raoultella group</taxon>
        <taxon>Klebsiella</taxon>
        <taxon>Klebsiella pneumoniae complex</taxon>
    </lineage>
</organism>
<proteinExistence type="inferred from homology"/>